<name>NUSB_RHORT</name>
<accession>Q2RTC4</accession>
<comment type="function">
    <text evidence="1">Involved in transcription antitermination. Required for transcription of ribosomal RNA (rRNA) genes. Binds specifically to the boxA antiterminator sequence of the ribosomal RNA (rrn) operons.</text>
</comment>
<comment type="similarity">
    <text evidence="1">Belongs to the NusB family.</text>
</comment>
<protein>
    <recommendedName>
        <fullName evidence="1">Transcription antitermination protein NusB</fullName>
    </recommendedName>
    <alternativeName>
        <fullName evidence="1">Antitermination factor NusB</fullName>
    </alternativeName>
</protein>
<keyword id="KW-1185">Reference proteome</keyword>
<keyword id="KW-0694">RNA-binding</keyword>
<keyword id="KW-0804">Transcription</keyword>
<keyword id="KW-0889">Transcription antitermination</keyword>
<keyword id="KW-0805">Transcription regulation</keyword>
<evidence type="ECO:0000255" key="1">
    <source>
        <dbReference type="HAMAP-Rule" id="MF_00073"/>
    </source>
</evidence>
<proteinExistence type="inferred from homology"/>
<dbReference type="EMBL" id="CP000230">
    <property type="protein sequence ID" value="ABC22621.1"/>
    <property type="molecule type" value="Genomic_DNA"/>
</dbReference>
<dbReference type="RefSeq" id="WP_011389574.1">
    <property type="nucleotide sequence ID" value="NC_007643.1"/>
</dbReference>
<dbReference type="RefSeq" id="YP_426908.1">
    <property type="nucleotide sequence ID" value="NC_007643.1"/>
</dbReference>
<dbReference type="SMR" id="Q2RTC4"/>
<dbReference type="STRING" id="269796.Rru_A1821"/>
<dbReference type="EnsemblBacteria" id="ABC22621">
    <property type="protein sequence ID" value="ABC22621"/>
    <property type="gene ID" value="Rru_A1821"/>
</dbReference>
<dbReference type="KEGG" id="rru:Rru_A1821"/>
<dbReference type="PATRIC" id="fig|269796.9.peg.1899"/>
<dbReference type="eggNOG" id="COG0781">
    <property type="taxonomic scope" value="Bacteria"/>
</dbReference>
<dbReference type="HOGENOM" id="CLU_087843_4_0_5"/>
<dbReference type="PhylomeDB" id="Q2RTC4"/>
<dbReference type="Proteomes" id="UP000001929">
    <property type="component" value="Chromosome"/>
</dbReference>
<dbReference type="GO" id="GO:0005829">
    <property type="term" value="C:cytosol"/>
    <property type="evidence" value="ECO:0007669"/>
    <property type="project" value="TreeGrafter"/>
</dbReference>
<dbReference type="GO" id="GO:0003723">
    <property type="term" value="F:RNA binding"/>
    <property type="evidence" value="ECO:0007669"/>
    <property type="project" value="UniProtKB-UniRule"/>
</dbReference>
<dbReference type="GO" id="GO:0006353">
    <property type="term" value="P:DNA-templated transcription termination"/>
    <property type="evidence" value="ECO:0007669"/>
    <property type="project" value="UniProtKB-UniRule"/>
</dbReference>
<dbReference type="GO" id="GO:0031564">
    <property type="term" value="P:transcription antitermination"/>
    <property type="evidence" value="ECO:0007669"/>
    <property type="project" value="UniProtKB-KW"/>
</dbReference>
<dbReference type="Gene3D" id="1.10.940.10">
    <property type="entry name" value="NusB-like"/>
    <property type="match status" value="1"/>
</dbReference>
<dbReference type="HAMAP" id="MF_00073">
    <property type="entry name" value="NusB"/>
    <property type="match status" value="1"/>
</dbReference>
<dbReference type="InterPro" id="IPR035926">
    <property type="entry name" value="NusB-like_sf"/>
</dbReference>
<dbReference type="InterPro" id="IPR011605">
    <property type="entry name" value="NusB_fam"/>
</dbReference>
<dbReference type="InterPro" id="IPR006027">
    <property type="entry name" value="NusB_RsmB_TIM44"/>
</dbReference>
<dbReference type="NCBIfam" id="TIGR01951">
    <property type="entry name" value="nusB"/>
    <property type="match status" value="1"/>
</dbReference>
<dbReference type="PANTHER" id="PTHR11078:SF3">
    <property type="entry name" value="ANTITERMINATION NUSB DOMAIN-CONTAINING PROTEIN"/>
    <property type="match status" value="1"/>
</dbReference>
<dbReference type="PANTHER" id="PTHR11078">
    <property type="entry name" value="N UTILIZATION SUBSTANCE PROTEIN B-RELATED"/>
    <property type="match status" value="1"/>
</dbReference>
<dbReference type="Pfam" id="PF01029">
    <property type="entry name" value="NusB"/>
    <property type="match status" value="1"/>
</dbReference>
<dbReference type="SUPFAM" id="SSF48013">
    <property type="entry name" value="NusB-like"/>
    <property type="match status" value="1"/>
</dbReference>
<feature type="chain" id="PRO_0000265579" description="Transcription antitermination protein NusB">
    <location>
        <begin position="1"/>
        <end position="185"/>
    </location>
</feature>
<organism>
    <name type="scientific">Rhodospirillum rubrum (strain ATCC 11170 / ATH 1.1.1 / DSM 467 / LMG 4362 / NCIMB 8255 / S1)</name>
    <dbReference type="NCBI Taxonomy" id="269796"/>
    <lineage>
        <taxon>Bacteria</taxon>
        <taxon>Pseudomonadati</taxon>
        <taxon>Pseudomonadota</taxon>
        <taxon>Alphaproteobacteria</taxon>
        <taxon>Rhodospirillales</taxon>
        <taxon>Rhodospirillaceae</taxon>
        <taxon>Rhodospirillum</taxon>
    </lineage>
</organism>
<sequence>MALQDDKPGSAPKERSGRQIRSSAARLAAVQALYVLDLAEDARVDQVVLDFMSGSMGGMAIVEVADPEGIFDPTEEIAALEPPDGELFAMLVRGAHAELARLDEVIGASLSADWPWDRLEPVVRAVLRAGVYELLERQRTPPRVAIKEYVDIAAAFYSGAEPGMVNAVLDRVARSARPEAFGGGV</sequence>
<gene>
    <name evidence="1" type="primary">nusB</name>
    <name type="ordered locus">Rru_A1821</name>
</gene>
<reference key="1">
    <citation type="journal article" date="2011" name="Stand. Genomic Sci.">
        <title>Complete genome sequence of Rhodospirillum rubrum type strain (S1).</title>
        <authorList>
            <person name="Munk A.C."/>
            <person name="Copeland A."/>
            <person name="Lucas S."/>
            <person name="Lapidus A."/>
            <person name="Del Rio T.G."/>
            <person name="Barry K."/>
            <person name="Detter J.C."/>
            <person name="Hammon N."/>
            <person name="Israni S."/>
            <person name="Pitluck S."/>
            <person name="Brettin T."/>
            <person name="Bruce D."/>
            <person name="Han C."/>
            <person name="Tapia R."/>
            <person name="Gilna P."/>
            <person name="Schmutz J."/>
            <person name="Larimer F."/>
            <person name="Land M."/>
            <person name="Kyrpides N.C."/>
            <person name="Mavromatis K."/>
            <person name="Richardson P."/>
            <person name="Rohde M."/>
            <person name="Goeker M."/>
            <person name="Klenk H.P."/>
            <person name="Zhang Y."/>
            <person name="Roberts G.P."/>
            <person name="Reslewic S."/>
            <person name="Schwartz D.C."/>
        </authorList>
    </citation>
    <scope>NUCLEOTIDE SEQUENCE [LARGE SCALE GENOMIC DNA]</scope>
    <source>
        <strain>ATCC 11170 / ATH 1.1.1 / DSM 467 / LMG 4362 / NCIMB 8255 / S1</strain>
    </source>
</reference>